<feature type="signal peptide" evidence="1">
    <location>
        <begin position="1"/>
        <end position="24"/>
    </location>
</feature>
<feature type="chain" id="PRO_0000432826" description="Non-classical arabinogalactan protein 31" evidence="1">
    <location>
        <begin position="25"/>
        <end position="359"/>
    </location>
</feature>
<feature type="repeat" description="1" evidence="9">
    <location>
        <begin position="90"/>
        <end position="109"/>
    </location>
</feature>
<feature type="repeat" description="2" evidence="9">
    <location>
        <begin position="122"/>
        <end position="141"/>
    </location>
</feature>
<feature type="repeat" description="3" evidence="9">
    <location>
        <begin position="142"/>
        <end position="161"/>
    </location>
</feature>
<feature type="repeat" description="4" evidence="9">
    <location>
        <begin position="162"/>
        <end position="181"/>
    </location>
</feature>
<feature type="region of interest" description="Disordered" evidence="3">
    <location>
        <begin position="31"/>
        <end position="215"/>
    </location>
</feature>
<feature type="compositionally biased region" description="Basic residues" evidence="3">
    <location>
        <begin position="44"/>
        <end position="66"/>
    </location>
</feature>
<feature type="compositionally biased region" description="Pro residues" evidence="3">
    <location>
        <begin position="67"/>
        <end position="215"/>
    </location>
</feature>
<feature type="modified residue" description="4-hydroxyproline" evidence="5">
    <location>
        <position position="71"/>
    </location>
</feature>
<feature type="modified residue" description="4-hydroxyproline" evidence="5">
    <location>
        <position position="75"/>
    </location>
</feature>
<feature type="modified residue" description="4-hydroxyproline" evidence="5">
    <location>
        <position position="79"/>
    </location>
</feature>
<feature type="modified residue" description="4-hydroxyproline" evidence="5">
    <location>
        <position position="82"/>
    </location>
</feature>
<feature type="modified residue" description="4-hydroxyproline" evidence="5">
    <location>
        <position position="83"/>
    </location>
</feature>
<feature type="modified residue" description="4-hydroxyproline" evidence="5">
    <location>
        <position position="87"/>
    </location>
</feature>
<feature type="modified residue" description="4-hydroxyproline" evidence="5">
    <location>
        <position position="91"/>
    </location>
</feature>
<feature type="modified residue" description="4-hydroxyproline" evidence="5">
    <location>
        <position position="95"/>
    </location>
</feature>
<feature type="modified residue" description="4-hydroxyproline" evidence="5">
    <location>
        <position position="99"/>
    </location>
</feature>
<feature type="modified residue" description="4-hydroxyproline" evidence="5">
    <location>
        <position position="103"/>
    </location>
</feature>
<feature type="modified residue" description="4-hydroxyproline" evidence="5">
    <location>
        <position position="107"/>
    </location>
</feature>
<feature type="modified residue" description="4-hydroxyproline" evidence="5">
    <location>
        <position position="111"/>
    </location>
</feature>
<feature type="modified residue" description="4-hydroxyproline" evidence="5">
    <location>
        <position position="114"/>
    </location>
</feature>
<feature type="modified residue" description="4-hydroxyproline" evidence="5">
    <location>
        <position position="115"/>
    </location>
</feature>
<feature type="modified residue" description="4-hydroxyproline" evidence="5">
    <location>
        <position position="119"/>
    </location>
</feature>
<feature type="modified residue" description="4-hydroxyproline" evidence="5">
    <location>
        <position position="123"/>
    </location>
</feature>
<feature type="modified residue" description="4-hydroxyproline" evidence="5">
    <location>
        <position position="127"/>
    </location>
</feature>
<feature type="modified residue" description="4-hydroxyproline" evidence="5">
    <location>
        <position position="131"/>
    </location>
</feature>
<feature type="modified residue" description="4-hydroxyproline" evidence="5">
    <location>
        <position position="135"/>
    </location>
</feature>
<feature type="modified residue" description="4-hydroxyproline" evidence="5">
    <location>
        <position position="139"/>
    </location>
</feature>
<feature type="modified residue" description="4-hydroxyproline" evidence="5">
    <location>
        <position position="143"/>
    </location>
</feature>
<feature type="modified residue" description="4-hydroxyproline" evidence="5">
    <location>
        <position position="147"/>
    </location>
</feature>
<feature type="modified residue" description="4-hydroxyproline" evidence="5">
    <location>
        <position position="151"/>
    </location>
</feature>
<feature type="modified residue" description="4-hydroxyproline" evidence="5">
    <location>
        <position position="155"/>
    </location>
</feature>
<feature type="modified residue" description="4-hydroxyproline" evidence="5">
    <location>
        <position position="159"/>
    </location>
</feature>
<feature type="modified residue" description="4-hydroxyproline" evidence="5">
    <location>
        <position position="163"/>
    </location>
</feature>
<feature type="modified residue" description="4-hydroxyproline" evidence="5">
    <location>
        <position position="167"/>
    </location>
</feature>
<feature type="modified residue" description="4-hydroxyproline" evidence="5">
    <location>
        <position position="171"/>
    </location>
</feature>
<feature type="modified residue" description="4-hydroxyproline" evidence="5">
    <location>
        <position position="175"/>
    </location>
</feature>
<feature type="modified residue" description="4-hydroxyproline" evidence="5">
    <location>
        <position position="179"/>
    </location>
</feature>
<feature type="modified residue" description="4-hydroxyproline" evidence="5">
    <location>
        <position position="183"/>
    </location>
</feature>
<feature type="modified residue" description="4-hydroxyproline" evidence="5">
    <location>
        <position position="186"/>
    </location>
</feature>
<feature type="modified residue" description="4-hydroxyproline" evidence="5">
    <location>
        <position position="187"/>
    </location>
</feature>
<feature type="modified residue" description="4-hydroxyproline" evidence="5">
    <location>
        <position position="191"/>
    </location>
</feature>
<feature type="modified residue" description="4-hydroxyproline" evidence="5">
    <location>
        <position position="195"/>
    </location>
</feature>
<feature type="modified residue" description="4-hydroxyproline" evidence="5">
    <location>
        <position position="199"/>
    </location>
</feature>
<feature type="modified residue" description="4-hydroxyproline" evidence="5">
    <location>
        <position position="203"/>
    </location>
</feature>
<feature type="modified residue" description="4-hydroxyproline" evidence="5">
    <location>
        <position position="207"/>
    </location>
</feature>
<feature type="modified residue" description="4-hydroxyproline" evidence="5">
    <location>
        <position position="210"/>
    </location>
</feature>
<feature type="modified residue" description="4-hydroxyproline" evidence="5">
    <location>
        <position position="211"/>
    </location>
</feature>
<feature type="modified residue" description="4-hydroxyproline" evidence="5">
    <location>
        <position position="215"/>
    </location>
</feature>
<feature type="modified residue" description="4-hydroxyproline" evidence="5">
    <location>
        <position position="219"/>
    </location>
</feature>
<feature type="glycosylation site" description="O-linked (Ara...) hydroxyproline" evidence="10">
    <location>
        <position position="71"/>
    </location>
</feature>
<feature type="glycosylation site" description="O-linked (Ara...) hydroxyproline" evidence="10">
    <location>
        <position position="75"/>
    </location>
</feature>
<feature type="glycosylation site" description="O-linked (Ara...) hydroxyproline" evidence="10">
    <location>
        <position position="79"/>
    </location>
</feature>
<feature type="glycosylation site" description="O-linked (Ara...) hydroxyproline" evidence="10">
    <location>
        <position position="82"/>
    </location>
</feature>
<feature type="glycosylation site" description="O-linked (Ara...) hydroxyproline" evidence="10">
    <location>
        <position position="83"/>
    </location>
</feature>
<feature type="glycosylation site" description="O-linked (Ara...) hydroxyproline" evidence="10">
    <location>
        <position position="87"/>
    </location>
</feature>
<feature type="glycosylation site" description="O-linked (Ara...) hydroxyproline" evidence="10">
    <location>
        <position position="91"/>
    </location>
</feature>
<feature type="glycosylation site" description="O-linked (Ara...) hydroxyproline" evidence="10">
    <location>
        <position position="95"/>
    </location>
</feature>
<feature type="glycosylation site" description="O-linked (Ara...) hydroxyproline" evidence="10">
    <location>
        <position position="99"/>
    </location>
</feature>
<feature type="glycosylation site" description="O-linked (Ara...) hydroxyproline" evidence="10">
    <location>
        <position position="103"/>
    </location>
</feature>
<feature type="glycosylation site" description="O-linked (Ara...) hydroxyproline" evidence="10">
    <location>
        <position position="107"/>
    </location>
</feature>
<feature type="glycosylation site" description="O-linked (Ara...) hydroxyproline" evidence="10">
    <location>
        <position position="111"/>
    </location>
</feature>
<feature type="glycosylation site" description="O-linked (Ara...) hydroxyproline" evidence="10">
    <location>
        <position position="114"/>
    </location>
</feature>
<feature type="glycosylation site" description="O-linked (Ara...) hydroxyproline" evidence="10">
    <location>
        <position position="115"/>
    </location>
</feature>
<feature type="glycosylation site" description="O-linked (Ara...) hydroxyproline" evidence="10">
    <location>
        <position position="119"/>
    </location>
</feature>
<feature type="glycosylation site" description="O-linked (Ara...) hydroxyproline" evidence="10">
    <location>
        <position position="123"/>
    </location>
</feature>
<feature type="glycosylation site" description="O-linked (Ara...) hydroxyproline" evidence="10">
    <location>
        <position position="127"/>
    </location>
</feature>
<feature type="glycosylation site" description="O-linked (Ara...) hydroxyproline" evidence="10">
    <location>
        <position position="131"/>
    </location>
</feature>
<feature type="glycosylation site" description="O-linked (Ara...) hydroxyproline" evidence="10">
    <location>
        <position position="135"/>
    </location>
</feature>
<feature type="glycosylation site" description="O-linked (Ara...) hydroxyproline" evidence="10">
    <location>
        <position position="139"/>
    </location>
</feature>
<feature type="glycosylation site" description="O-linked (Ara...) hydroxyproline" evidence="10">
    <location>
        <position position="143"/>
    </location>
</feature>
<feature type="glycosylation site" description="O-linked (Ara...) hydroxyproline" evidence="10">
    <location>
        <position position="147"/>
    </location>
</feature>
<feature type="glycosylation site" description="O-linked (Ara...) hydroxyproline" evidence="10">
    <location>
        <position position="151"/>
    </location>
</feature>
<feature type="glycosylation site" description="O-linked (Ara...) hydroxyproline" evidence="10">
    <location>
        <position position="155"/>
    </location>
</feature>
<feature type="glycosylation site" description="O-linked (Ara...) hydroxyproline" evidence="10">
    <location>
        <position position="159"/>
    </location>
</feature>
<feature type="glycosylation site" description="O-linked (Ara...) hydroxyproline" evidence="10">
    <location>
        <position position="163"/>
    </location>
</feature>
<feature type="glycosylation site" description="O-linked (Ara...) hydroxyproline" evidence="10">
    <location>
        <position position="167"/>
    </location>
</feature>
<feature type="glycosylation site" description="O-linked (Ara...) hydroxyproline" evidence="10">
    <location>
        <position position="171"/>
    </location>
</feature>
<feature type="glycosylation site" description="O-linked (Ara...) hydroxyproline" evidence="10">
    <location>
        <position position="175"/>
    </location>
</feature>
<feature type="glycosylation site" description="O-linked (Ara...) hydroxyproline" evidence="10">
    <location>
        <position position="179"/>
    </location>
</feature>
<feature type="glycosylation site" description="O-linked (Ara...) hydroxyproline" evidence="10">
    <location>
        <position position="183"/>
    </location>
</feature>
<feature type="glycosylation site" description="O-linked (Ara...) hydroxyproline" evidence="10">
    <location>
        <position position="186"/>
    </location>
</feature>
<feature type="glycosylation site" description="O-linked (Ara...) hydroxyproline" evidence="10">
    <location>
        <position position="187"/>
    </location>
</feature>
<feature type="glycosylation site" description="O-linked (Ara...) hydroxyproline" evidence="10">
    <location>
        <position position="191"/>
    </location>
</feature>
<feature type="glycosylation site" description="O-linked (Ara...) hydroxyproline" evidence="10">
    <location>
        <position position="195"/>
    </location>
</feature>
<feature type="glycosylation site" description="O-linked (Ara...) hydroxyproline" evidence="10">
    <location>
        <position position="199"/>
    </location>
</feature>
<feature type="glycosylation site" description="O-linked (Ara...) hydroxyproline" evidence="10">
    <location>
        <position position="203"/>
    </location>
</feature>
<feature type="glycosylation site" description="O-linked (Ara...) hydroxyproline" evidence="10">
    <location>
        <position position="207"/>
    </location>
</feature>
<feature type="glycosylation site" description="O-linked (Ara...) hydroxyproline" evidence="10">
    <location>
        <position position="210"/>
    </location>
</feature>
<feature type="glycosylation site" description="O-linked (Ara...) hydroxyproline" evidence="10">
    <location>
        <position position="211"/>
    </location>
</feature>
<feature type="glycosylation site" description="O-linked (Ara...) hydroxyproline" evidence="10">
    <location>
        <position position="215"/>
    </location>
</feature>
<feature type="glycosylation site" description="O-linked (Ara...) hydroxyproline" evidence="10">
    <location>
        <position position="219"/>
    </location>
</feature>
<feature type="glycosylation site" description="N-linked (GlcNAc...) asparagine" evidence="2">
    <location>
        <position position="226"/>
    </location>
</feature>
<feature type="glycosylation site" description="N-linked (GlcNAc...) asparagine" evidence="2">
    <location>
        <position position="269"/>
    </location>
</feature>
<feature type="splice variant" id="VSP_057583" description="In isoform 2.">
    <original>APVKPPTKPPVKPPVYPPTKAPVKPPTKPPVKPPVSPPAKPPVKPPV</original>
    <variation>PPV</variation>
    <location>
        <begin position="150"/>
        <end position="196"/>
    </location>
</feature>
<feature type="sequence conflict" description="In Ref. 3; BAF01102." evidence="8" ref="3">
    <original>P</original>
    <variation>A</variation>
    <location sequence="Q9FZA2-2">
        <position position="150"/>
    </location>
</feature>
<dbReference type="EMBL" id="AC021044">
    <property type="protein sequence ID" value="AAF98426.1"/>
    <property type="molecule type" value="Genomic_DNA"/>
</dbReference>
<dbReference type="EMBL" id="CP002684">
    <property type="protein sequence ID" value="AEE30943.1"/>
    <property type="molecule type" value="Genomic_DNA"/>
</dbReference>
<dbReference type="EMBL" id="CP002684">
    <property type="protein sequence ID" value="AEE30944.1"/>
    <property type="molecule type" value="Genomic_DNA"/>
</dbReference>
<dbReference type="EMBL" id="AK229236">
    <property type="protein sequence ID" value="BAF01102.1"/>
    <property type="molecule type" value="mRNA"/>
</dbReference>
<dbReference type="EMBL" id="BT029488">
    <property type="protein sequence ID" value="ABL66745.1"/>
    <property type="molecule type" value="mRNA"/>
</dbReference>
<dbReference type="PIR" id="B86409">
    <property type="entry name" value="B86409"/>
</dbReference>
<dbReference type="RefSeq" id="NP_001077616.1">
    <molecule id="Q9FZA2-2"/>
    <property type="nucleotide sequence ID" value="NM_001084147.1"/>
</dbReference>
<dbReference type="RefSeq" id="NP_174150.1">
    <molecule id="Q9FZA2-1"/>
    <property type="nucleotide sequence ID" value="NM_102594.3"/>
</dbReference>
<dbReference type="SMR" id="Q9FZA2"/>
<dbReference type="FunCoup" id="Q9FZA2">
    <property type="interactions" value="19"/>
</dbReference>
<dbReference type="IntAct" id="Q9FZA2">
    <property type="interactions" value="1"/>
</dbReference>
<dbReference type="STRING" id="3702.Q9FZA2"/>
<dbReference type="GlyCosmos" id="Q9FZA2">
    <property type="glycosylation" value="44 sites, No reported glycans"/>
</dbReference>
<dbReference type="GlyGen" id="Q9FZA2">
    <property type="glycosylation" value="3 sites"/>
</dbReference>
<dbReference type="SwissPalm" id="Q9FZA2"/>
<dbReference type="PaxDb" id="3702-AT1G28290.1"/>
<dbReference type="ProteomicsDB" id="244686">
    <molecule id="Q9FZA2-1"/>
</dbReference>
<dbReference type="EnsemblPlants" id="AT1G28290.1">
    <molecule id="Q9FZA2-1"/>
    <property type="protein sequence ID" value="AT1G28290.1"/>
    <property type="gene ID" value="AT1G28290"/>
</dbReference>
<dbReference type="EnsemblPlants" id="AT1G28290.2">
    <molecule id="Q9FZA2-2"/>
    <property type="protein sequence ID" value="AT1G28290.2"/>
    <property type="gene ID" value="AT1G28290"/>
</dbReference>
<dbReference type="GeneID" id="839723"/>
<dbReference type="Gramene" id="AT1G28290.1">
    <molecule id="Q9FZA2-1"/>
    <property type="protein sequence ID" value="AT1G28290.1"/>
    <property type="gene ID" value="AT1G28290"/>
</dbReference>
<dbReference type="Gramene" id="AT1G28290.2">
    <molecule id="Q9FZA2-2"/>
    <property type="protein sequence ID" value="AT1G28290.2"/>
    <property type="gene ID" value="AT1G28290"/>
</dbReference>
<dbReference type="KEGG" id="ath:AT1G28290"/>
<dbReference type="Araport" id="AT1G28290"/>
<dbReference type="TAIR" id="AT1G28290">
    <property type="gene designation" value="AGP31"/>
</dbReference>
<dbReference type="eggNOG" id="ENOG502QPUY">
    <property type="taxonomic scope" value="Eukaryota"/>
</dbReference>
<dbReference type="HOGENOM" id="CLU_055714_1_0_1"/>
<dbReference type="InParanoid" id="Q9FZA2"/>
<dbReference type="OMA" id="AFEPNCH"/>
<dbReference type="CD-CODE" id="4299E36E">
    <property type="entry name" value="Nucleolus"/>
</dbReference>
<dbReference type="PRO" id="PR:Q9FZA2"/>
<dbReference type="Proteomes" id="UP000006548">
    <property type="component" value="Chromosome 1"/>
</dbReference>
<dbReference type="ExpressionAtlas" id="Q9FZA2">
    <property type="expression patterns" value="baseline and differential"/>
</dbReference>
<dbReference type="GO" id="GO:0005576">
    <property type="term" value="C:extracellular region"/>
    <property type="evidence" value="ECO:0007669"/>
    <property type="project" value="UniProtKB-KW"/>
</dbReference>
<dbReference type="GO" id="GO:0009505">
    <property type="term" value="C:plant-type cell wall"/>
    <property type="evidence" value="ECO:0000314"/>
    <property type="project" value="UniProtKB"/>
</dbReference>
<dbReference type="GO" id="GO:0005886">
    <property type="term" value="C:plasma membrane"/>
    <property type="evidence" value="ECO:0000314"/>
    <property type="project" value="TAIR"/>
</dbReference>
<dbReference type="GO" id="GO:0009506">
    <property type="term" value="C:plasmodesma"/>
    <property type="evidence" value="ECO:0007005"/>
    <property type="project" value="TAIR"/>
</dbReference>
<dbReference type="GO" id="GO:0009753">
    <property type="term" value="P:response to jasmonic acid"/>
    <property type="evidence" value="ECO:0000270"/>
    <property type="project" value="TAIR"/>
</dbReference>
<dbReference type="PANTHER" id="PTHR33470:SF21">
    <property type="entry name" value="NON-CLASSICAL ARABINOGALACTAN PROTEIN 31"/>
    <property type="match status" value="1"/>
</dbReference>
<dbReference type="PANTHER" id="PTHR33470">
    <property type="entry name" value="OS01G0164075 PROTEIN"/>
    <property type="match status" value="1"/>
</dbReference>
<dbReference type="Pfam" id="PF01190">
    <property type="entry name" value="Pollen_Ole_e_1"/>
    <property type="match status" value="1"/>
</dbReference>
<dbReference type="PRINTS" id="PR01217">
    <property type="entry name" value="PRICHEXTENSN"/>
</dbReference>
<name>AGP31_ARATH</name>
<comment type="function">
    <text evidence="6">Proteoglycan that may contribute to the strengthening of cell walls.</text>
</comment>
<comment type="subcellular location">
    <subcellularLocation>
        <location evidence="4">Secreted</location>
        <location evidence="4">Cell wall</location>
    </subcellularLocation>
</comment>
<comment type="alternative products">
    <event type="alternative splicing"/>
    <isoform>
        <id>Q9FZA2-1</id>
        <name>1</name>
        <sequence type="displayed"/>
    </isoform>
    <isoform>
        <id>Q9FZA2-2</id>
        <name>2</name>
        <sequence type="described" ref="VSP_057583"/>
    </isoform>
</comment>
<comment type="tissue specificity">
    <text evidence="4">Expressed in vascular bundles of roots, leaves, sepals and stamen filaments, and pistils but not stigma.</text>
</comment>
<comment type="induction">
    <text evidence="4">Down-regulated by wounding, abscisic acid (ABA) and jasmonic acid (JA).</text>
</comment>
<comment type="PTM">
    <text evidence="5">Hydroxylated on numerous prolines in the proline-rich region.</text>
</comment>
<comment type="PTM">
    <text evidence="5">O-glycosylated on numerous hydroxyprolines in the proline-rich region; noncontiguous hydroxylproline residues are glycosylated with arabinogalactan.</text>
</comment>
<comment type="similarity">
    <text evidence="8">Belongs to the non-classical AGP family.</text>
</comment>
<accession>Q9FZA2</accession>
<accession>F4HWJ6</accession>
<accession>Q0WP47</accession>
<sequence length="359" mass="38489">MGFIGKSVLVSLVALWCFTSSVFTEEVNHKTQTPSLAPAPAPYHHGHHHPHPPHHHHPHPHPHPHPPAKSPVKPPVKAPVSPPAKPPVKPPVYPPTKAPVKPPTKPPVKPPVSPPAKPPVKPPVYPPTKAPVKPPTKPPVKPPVYPPTKAPVKPPTKPPVKPPVYPPTKAPVKPPTKPPVKPPVSPPAKPPVKPPVYPPTKAPVKPPVSPPTKPPVTPPVYPPKFNRSLVAVRGTVYCKSCKYAAFNTLLGAKPIEGATVKLVCKSKKNITAETTTDKNGYFLLLAPKTVTNFGFRGCRVYLVKSKDYKCSKVSKLFGGDVGAELKPEKKLGKSTVVVNKLVYGLFNVGPFAFNPSCPK</sequence>
<organism>
    <name type="scientific">Arabidopsis thaliana</name>
    <name type="common">Mouse-ear cress</name>
    <dbReference type="NCBI Taxonomy" id="3702"/>
    <lineage>
        <taxon>Eukaryota</taxon>
        <taxon>Viridiplantae</taxon>
        <taxon>Streptophyta</taxon>
        <taxon>Embryophyta</taxon>
        <taxon>Tracheophyta</taxon>
        <taxon>Spermatophyta</taxon>
        <taxon>Magnoliopsida</taxon>
        <taxon>eudicotyledons</taxon>
        <taxon>Gunneridae</taxon>
        <taxon>Pentapetalae</taxon>
        <taxon>rosids</taxon>
        <taxon>malvids</taxon>
        <taxon>Brassicales</taxon>
        <taxon>Brassicaceae</taxon>
        <taxon>Camelineae</taxon>
        <taxon>Arabidopsis</taxon>
    </lineage>
</organism>
<proteinExistence type="evidence at protein level"/>
<evidence type="ECO:0000255" key="1"/>
<evidence type="ECO:0000255" key="2">
    <source>
        <dbReference type="PROSITE-ProRule" id="PRU00498"/>
    </source>
</evidence>
<evidence type="ECO:0000256" key="3">
    <source>
        <dbReference type="SAM" id="MobiDB-lite"/>
    </source>
</evidence>
<evidence type="ECO:0000269" key="4">
    <source>
    </source>
</evidence>
<evidence type="ECO:0000269" key="5">
    <source>
    </source>
</evidence>
<evidence type="ECO:0000269" key="6">
    <source>
    </source>
</evidence>
<evidence type="ECO:0000303" key="7">
    <source>
    </source>
</evidence>
<evidence type="ECO:0000305" key="8"/>
<evidence type="ECO:0000305" key="9">
    <source>
    </source>
</evidence>
<evidence type="ECO:0000305" key="10">
    <source>
    </source>
</evidence>
<evidence type="ECO:0000312" key="11">
    <source>
        <dbReference type="Araport" id="AT1G28290"/>
    </source>
</evidence>
<evidence type="ECO:0000312" key="12">
    <source>
        <dbReference type="EMBL" id="AAF98426.1"/>
    </source>
</evidence>
<reference key="1">
    <citation type="journal article" date="2000" name="Nature">
        <title>Sequence and analysis of chromosome 1 of the plant Arabidopsis thaliana.</title>
        <authorList>
            <person name="Theologis A."/>
            <person name="Ecker J.R."/>
            <person name="Palm C.J."/>
            <person name="Federspiel N.A."/>
            <person name="Kaul S."/>
            <person name="White O."/>
            <person name="Alonso J."/>
            <person name="Altafi H."/>
            <person name="Araujo R."/>
            <person name="Bowman C.L."/>
            <person name="Brooks S.Y."/>
            <person name="Buehler E."/>
            <person name="Chan A."/>
            <person name="Chao Q."/>
            <person name="Chen H."/>
            <person name="Cheuk R.F."/>
            <person name="Chin C.W."/>
            <person name="Chung M.K."/>
            <person name="Conn L."/>
            <person name="Conway A.B."/>
            <person name="Conway A.R."/>
            <person name="Creasy T.H."/>
            <person name="Dewar K."/>
            <person name="Dunn P."/>
            <person name="Etgu P."/>
            <person name="Feldblyum T.V."/>
            <person name="Feng J.-D."/>
            <person name="Fong B."/>
            <person name="Fujii C.Y."/>
            <person name="Gill J.E."/>
            <person name="Goldsmith A.D."/>
            <person name="Haas B."/>
            <person name="Hansen N.F."/>
            <person name="Hughes B."/>
            <person name="Huizar L."/>
            <person name="Hunter J.L."/>
            <person name="Jenkins J."/>
            <person name="Johnson-Hopson C."/>
            <person name="Khan S."/>
            <person name="Khaykin E."/>
            <person name="Kim C.J."/>
            <person name="Koo H.L."/>
            <person name="Kremenetskaia I."/>
            <person name="Kurtz D.B."/>
            <person name="Kwan A."/>
            <person name="Lam B."/>
            <person name="Langin-Hooper S."/>
            <person name="Lee A."/>
            <person name="Lee J.M."/>
            <person name="Lenz C.A."/>
            <person name="Li J.H."/>
            <person name="Li Y.-P."/>
            <person name="Lin X."/>
            <person name="Liu S.X."/>
            <person name="Liu Z.A."/>
            <person name="Luros J.S."/>
            <person name="Maiti R."/>
            <person name="Marziali A."/>
            <person name="Militscher J."/>
            <person name="Miranda M."/>
            <person name="Nguyen M."/>
            <person name="Nierman W.C."/>
            <person name="Osborne B.I."/>
            <person name="Pai G."/>
            <person name="Peterson J."/>
            <person name="Pham P.K."/>
            <person name="Rizzo M."/>
            <person name="Rooney T."/>
            <person name="Rowley D."/>
            <person name="Sakano H."/>
            <person name="Salzberg S.L."/>
            <person name="Schwartz J.R."/>
            <person name="Shinn P."/>
            <person name="Southwick A.M."/>
            <person name="Sun H."/>
            <person name="Tallon L.J."/>
            <person name="Tambunga G."/>
            <person name="Toriumi M.J."/>
            <person name="Town C.D."/>
            <person name="Utterback T."/>
            <person name="Van Aken S."/>
            <person name="Vaysberg M."/>
            <person name="Vysotskaia V.S."/>
            <person name="Walker M."/>
            <person name="Wu D."/>
            <person name="Yu G."/>
            <person name="Fraser C.M."/>
            <person name="Venter J.C."/>
            <person name="Davis R.W."/>
        </authorList>
    </citation>
    <scope>NUCLEOTIDE SEQUENCE [LARGE SCALE GENOMIC DNA]</scope>
    <source>
        <strain>cv. Columbia</strain>
    </source>
</reference>
<reference key="2">
    <citation type="journal article" date="2017" name="Plant J.">
        <title>Araport11: a complete reannotation of the Arabidopsis thaliana reference genome.</title>
        <authorList>
            <person name="Cheng C.Y."/>
            <person name="Krishnakumar V."/>
            <person name="Chan A.P."/>
            <person name="Thibaud-Nissen F."/>
            <person name="Schobel S."/>
            <person name="Town C.D."/>
        </authorList>
    </citation>
    <scope>GENOME REANNOTATION</scope>
    <source>
        <strain>cv. Columbia</strain>
    </source>
</reference>
<reference key="3">
    <citation type="submission" date="2006-07" db="EMBL/GenBank/DDBJ databases">
        <title>Large-scale analysis of RIKEN Arabidopsis full-length (RAFL) cDNAs.</title>
        <authorList>
            <person name="Totoki Y."/>
            <person name="Seki M."/>
            <person name="Ishida J."/>
            <person name="Nakajima M."/>
            <person name="Enju A."/>
            <person name="Kamiya A."/>
            <person name="Narusaka M."/>
            <person name="Shin-i T."/>
            <person name="Nakagawa M."/>
            <person name="Sakamoto N."/>
            <person name="Oishi K."/>
            <person name="Kohara Y."/>
            <person name="Kobayashi M."/>
            <person name="Toyoda A."/>
            <person name="Sakaki Y."/>
            <person name="Sakurai T."/>
            <person name="Iida K."/>
            <person name="Akiyama K."/>
            <person name="Satou M."/>
            <person name="Toyoda T."/>
            <person name="Konagaya A."/>
            <person name="Carninci P."/>
            <person name="Kawai J."/>
            <person name="Hayashizaki Y."/>
            <person name="Shinozaki K."/>
        </authorList>
    </citation>
    <scope>NUCLEOTIDE SEQUENCE [LARGE SCALE MRNA] (ISOFORM 2)</scope>
    <source>
        <strain>cv. Columbia</strain>
    </source>
</reference>
<reference key="4">
    <citation type="submission" date="2006-12" db="EMBL/GenBank/DDBJ databases">
        <title>Arabidopsis ORF clones.</title>
        <authorList>
            <person name="Bautista V.R."/>
            <person name="Kim C.J."/>
            <person name="Chen H."/>
            <person name="Quinitio C."/>
            <person name="Ecker J.R."/>
        </authorList>
    </citation>
    <scope>NUCLEOTIDE SEQUENCE [LARGE SCALE MRNA] (ISOFORM 1)</scope>
    <source>
        <strain>cv. Columbia</strain>
    </source>
</reference>
<reference key="5">
    <citation type="journal article" date="2007" name="Plant Physiol.">
        <title>A nonclassical arabinogalactan protein gene highly expressed in vascular tissues, AGP31, is transcriptionally repressed by methyl jasmonic acid in Arabidopsis.</title>
        <authorList>
            <person name="Liu C."/>
            <person name="Mehdy M.C."/>
        </authorList>
    </citation>
    <scope>SUBCELLULAR LOCATION</scope>
    <scope>TISSUE SPECIFICITY</scope>
    <scope>INDUCTION</scope>
</reference>
<reference key="6">
    <citation type="journal article" date="2012" name="J. Biol. Chem.">
        <title>Characterization of the arabinogalactan protein 31 (AGP31) of Arabidopsis thaliana: new advances on the Hyp-O-glycosylation of the Pro-rich domain.</title>
        <authorList>
            <person name="Hijazi M."/>
            <person name="Durand J."/>
            <person name="Pichereaux C."/>
            <person name="Pont F."/>
            <person name="Jamet E."/>
            <person name="Albenne C."/>
        </authorList>
    </citation>
    <scope>IDENTIFICATION BY MASS SPECTROMETRY</scope>
    <scope>HYDROXYLATION AT PRO-71; PRO-75; PRO-79; PRO-82; PRO-83; PRO-87; PRO-91; PRO-95; PRO-99; PRO-103; PRO-107; PRO-111; PRO-114; PRO-115; PRO-119; PRO-123; PRO-127; PRO-131; PRO-135; PRO-139; PRO-143; PRO-147; PRO-151; PRO-155; PRO-159; PRO-163; PRO-167; PRO-171; PRO-175; PRO-179; PRO-183; PRO-186; PRO-187; PRO-191; PRO-195; PRO-199; PRO-203; PRO-207; PRO-210; PRO-211; PRO-215 AND PRO-219</scope>
    <scope>GLYCOSYLATION</scope>
</reference>
<reference key="7">
    <citation type="journal article" date="2014" name="Ann. Bot.">
        <title>Arabinogalactan protein 31 (AGP31), a putative network-forming protein in Arabidopsis thaliana cell walls?</title>
        <authorList>
            <person name="Hijazi M."/>
            <person name="Roujol D."/>
            <person name="Nguyen-Kim H."/>
            <person name="Del Rocio Cisneros Castillo L."/>
            <person name="Saland E."/>
            <person name="Jamet E."/>
            <person name="Albenne C."/>
        </authorList>
    </citation>
    <scope>FUNCTION</scope>
</reference>
<gene>
    <name evidence="7" type="primary">AGP31</name>
    <name evidence="11" type="ordered locus">At1g28290</name>
    <name evidence="12" type="ORF">F3H9.6</name>
</gene>
<keyword id="KW-0025">Alternative splicing</keyword>
<keyword id="KW-0134">Cell wall</keyword>
<keyword id="KW-0325">Glycoprotein</keyword>
<keyword id="KW-0379">Hydroxylation</keyword>
<keyword id="KW-0654">Proteoglycan</keyword>
<keyword id="KW-1185">Reference proteome</keyword>
<keyword id="KW-0677">Repeat</keyword>
<keyword id="KW-0964">Secreted</keyword>
<keyword id="KW-0732">Signal</keyword>
<protein>
    <recommendedName>
        <fullName evidence="7">Non-classical arabinogalactan protein 31</fullName>
    </recommendedName>
    <alternativeName>
        <fullName evidence="8">Hydroxyproline-rich arabinogalactan protein 31</fullName>
    </alternativeName>
</protein>